<dbReference type="EC" id="4.2.1.19" evidence="1"/>
<dbReference type="EMBL" id="BA000035">
    <property type="protein sequence ID" value="BAC18811.1"/>
    <property type="molecule type" value="Genomic_DNA"/>
</dbReference>
<dbReference type="RefSeq" id="WP_006767999.1">
    <property type="nucleotide sequence ID" value="NZ_GG700683.1"/>
</dbReference>
<dbReference type="SMR" id="Q8FNZ2"/>
<dbReference type="STRING" id="196164.gene:10742429"/>
<dbReference type="KEGG" id="cef:CE2001"/>
<dbReference type="eggNOG" id="COG0131">
    <property type="taxonomic scope" value="Bacteria"/>
</dbReference>
<dbReference type="HOGENOM" id="CLU_044308_3_0_11"/>
<dbReference type="OrthoDB" id="9790411at2"/>
<dbReference type="UniPathway" id="UPA00031">
    <property type="reaction ID" value="UER00011"/>
</dbReference>
<dbReference type="Proteomes" id="UP000001409">
    <property type="component" value="Chromosome"/>
</dbReference>
<dbReference type="GO" id="GO:0005737">
    <property type="term" value="C:cytoplasm"/>
    <property type="evidence" value="ECO:0007669"/>
    <property type="project" value="UniProtKB-SubCell"/>
</dbReference>
<dbReference type="GO" id="GO:0004424">
    <property type="term" value="F:imidazoleglycerol-phosphate dehydratase activity"/>
    <property type="evidence" value="ECO:0007669"/>
    <property type="project" value="UniProtKB-UniRule"/>
</dbReference>
<dbReference type="GO" id="GO:0000105">
    <property type="term" value="P:L-histidine biosynthetic process"/>
    <property type="evidence" value="ECO:0007669"/>
    <property type="project" value="UniProtKB-UniRule"/>
</dbReference>
<dbReference type="CDD" id="cd07914">
    <property type="entry name" value="IGPD"/>
    <property type="match status" value="1"/>
</dbReference>
<dbReference type="FunFam" id="3.30.230.40:FF:000001">
    <property type="entry name" value="Imidazoleglycerol-phosphate dehydratase HisB"/>
    <property type="match status" value="1"/>
</dbReference>
<dbReference type="FunFam" id="3.30.230.40:FF:000003">
    <property type="entry name" value="Imidazoleglycerol-phosphate dehydratase HisB"/>
    <property type="match status" value="1"/>
</dbReference>
<dbReference type="Gene3D" id="3.30.230.40">
    <property type="entry name" value="Imidazole glycerol phosphate dehydratase, domain 1"/>
    <property type="match status" value="2"/>
</dbReference>
<dbReference type="HAMAP" id="MF_00076">
    <property type="entry name" value="HisB"/>
    <property type="match status" value="1"/>
</dbReference>
<dbReference type="InterPro" id="IPR038494">
    <property type="entry name" value="IGPD_sf"/>
</dbReference>
<dbReference type="InterPro" id="IPR000807">
    <property type="entry name" value="ImidazoleglycerolP_deHydtase"/>
</dbReference>
<dbReference type="InterPro" id="IPR020565">
    <property type="entry name" value="ImidazoleglycerP_deHydtase_CS"/>
</dbReference>
<dbReference type="InterPro" id="IPR020568">
    <property type="entry name" value="Ribosomal_Su5_D2-typ_SF"/>
</dbReference>
<dbReference type="NCBIfam" id="NF002110">
    <property type="entry name" value="PRK00951.1-6"/>
    <property type="match status" value="1"/>
</dbReference>
<dbReference type="NCBIfam" id="NF002111">
    <property type="entry name" value="PRK00951.2-1"/>
    <property type="match status" value="1"/>
</dbReference>
<dbReference type="NCBIfam" id="NF002114">
    <property type="entry name" value="PRK00951.2-4"/>
    <property type="match status" value="1"/>
</dbReference>
<dbReference type="PANTHER" id="PTHR23133:SF2">
    <property type="entry name" value="IMIDAZOLEGLYCEROL-PHOSPHATE DEHYDRATASE"/>
    <property type="match status" value="1"/>
</dbReference>
<dbReference type="PANTHER" id="PTHR23133">
    <property type="entry name" value="IMIDAZOLEGLYCEROL-PHOSPHATE DEHYDRATASE HIS7"/>
    <property type="match status" value="1"/>
</dbReference>
<dbReference type="Pfam" id="PF00475">
    <property type="entry name" value="IGPD"/>
    <property type="match status" value="1"/>
</dbReference>
<dbReference type="SUPFAM" id="SSF54211">
    <property type="entry name" value="Ribosomal protein S5 domain 2-like"/>
    <property type="match status" value="2"/>
</dbReference>
<dbReference type="PROSITE" id="PS00954">
    <property type="entry name" value="IGP_DEHYDRATASE_1"/>
    <property type="match status" value="1"/>
</dbReference>
<dbReference type="PROSITE" id="PS00955">
    <property type="entry name" value="IGP_DEHYDRATASE_2"/>
    <property type="match status" value="1"/>
</dbReference>
<proteinExistence type="inferred from homology"/>
<keyword id="KW-0028">Amino-acid biosynthesis</keyword>
<keyword id="KW-0963">Cytoplasm</keyword>
<keyword id="KW-0368">Histidine biosynthesis</keyword>
<keyword id="KW-0456">Lyase</keyword>
<keyword id="KW-1185">Reference proteome</keyword>
<gene>
    <name evidence="1" type="primary">hisB</name>
    <name type="ordered locus">CE2001</name>
</gene>
<protein>
    <recommendedName>
        <fullName evidence="1">Imidazoleglycerol-phosphate dehydratase</fullName>
        <shortName evidence="1">IGPD</shortName>
        <ecNumber evidence="1">4.2.1.19</ecNumber>
    </recommendedName>
</protein>
<organism>
    <name type="scientific">Corynebacterium efficiens (strain DSM 44549 / YS-314 / AJ 12310 / JCM 11189 / NBRC 100395)</name>
    <dbReference type="NCBI Taxonomy" id="196164"/>
    <lineage>
        <taxon>Bacteria</taxon>
        <taxon>Bacillati</taxon>
        <taxon>Actinomycetota</taxon>
        <taxon>Actinomycetes</taxon>
        <taxon>Mycobacteriales</taxon>
        <taxon>Corynebacteriaceae</taxon>
        <taxon>Corynebacterium</taxon>
    </lineage>
</organism>
<reference key="1">
    <citation type="journal article" date="2003" name="Genome Res.">
        <title>Comparative complete genome sequence analysis of the amino acid replacements responsible for the thermostability of Corynebacterium efficiens.</title>
        <authorList>
            <person name="Nishio Y."/>
            <person name="Nakamura Y."/>
            <person name="Kawarabayasi Y."/>
            <person name="Usuda Y."/>
            <person name="Kimura E."/>
            <person name="Sugimoto S."/>
            <person name="Matsui K."/>
            <person name="Yamagishi A."/>
            <person name="Kikuchi H."/>
            <person name="Ikeo K."/>
            <person name="Gojobori T."/>
        </authorList>
    </citation>
    <scope>NUCLEOTIDE SEQUENCE [LARGE SCALE GENOMIC DNA]</scope>
    <source>
        <strain>DSM 44549 / YS-314 / AJ 12310 / JCM 11189 / NBRC 100395</strain>
    </source>
</reference>
<feature type="chain" id="PRO_0000158126" description="Imidazoleglycerol-phosphate dehydratase">
    <location>
        <begin position="1"/>
        <end position="202"/>
    </location>
</feature>
<sequence length="202" mass="21912">MTTAPRIGRATRTTSESDITVEINLDGTGTVDIDTGLPFFDHMLTAFGVHGSFDLTVHAKGDIEIDAHHTVEDTAIVLGQALLDAIGDKKGIRRFASCQLPMDEALVEAVVDISGRPYFVINGEPDHMISAVIGGHYATVINEHFFETLALNSRITLHVICHYGRDPHHITEAEYKAVARALRAAVEMDPRQTGIPSTKGAL</sequence>
<evidence type="ECO:0000255" key="1">
    <source>
        <dbReference type="HAMAP-Rule" id="MF_00076"/>
    </source>
</evidence>
<comment type="catalytic activity">
    <reaction evidence="1">
        <text>D-erythro-1-(imidazol-4-yl)glycerol 3-phosphate = 3-(imidazol-4-yl)-2-oxopropyl phosphate + H2O</text>
        <dbReference type="Rhea" id="RHEA:11040"/>
        <dbReference type="ChEBI" id="CHEBI:15377"/>
        <dbReference type="ChEBI" id="CHEBI:57766"/>
        <dbReference type="ChEBI" id="CHEBI:58278"/>
        <dbReference type="EC" id="4.2.1.19"/>
    </reaction>
</comment>
<comment type="pathway">
    <text evidence="1">Amino-acid biosynthesis; L-histidine biosynthesis; L-histidine from 5-phospho-alpha-D-ribose 1-diphosphate: step 6/9.</text>
</comment>
<comment type="subcellular location">
    <subcellularLocation>
        <location evidence="1">Cytoplasm</location>
    </subcellularLocation>
</comment>
<comment type="similarity">
    <text evidence="1">Belongs to the imidazoleglycerol-phosphate dehydratase family.</text>
</comment>
<accession>Q8FNZ2</accession>
<name>HIS7_COREF</name>